<dbReference type="EMBL" id="AE005674">
    <property type="protein sequence ID" value="AAN44797.1"/>
    <property type="molecule type" value="Genomic_DNA"/>
</dbReference>
<dbReference type="EMBL" id="AE014073">
    <property type="protein sequence ID" value="AAP19379.1"/>
    <property type="molecule type" value="Genomic_DNA"/>
</dbReference>
<dbReference type="RefSeq" id="NP_709090.1">
    <property type="nucleotide sequence ID" value="NC_004337.2"/>
</dbReference>
<dbReference type="RefSeq" id="WP_001140433.1">
    <property type="nucleotide sequence ID" value="NZ_WPGW01000088.1"/>
</dbReference>
<dbReference type="SMR" id="P0AG54"/>
<dbReference type="STRING" id="198214.SF3334"/>
<dbReference type="PaxDb" id="198214-SF3334"/>
<dbReference type="GeneID" id="1027036"/>
<dbReference type="GeneID" id="93778685"/>
<dbReference type="KEGG" id="sfl:SF3334"/>
<dbReference type="KEGG" id="sfx:S4428"/>
<dbReference type="PATRIC" id="fig|198214.7.peg.3943"/>
<dbReference type="HOGENOM" id="CLU_131047_1_4_6"/>
<dbReference type="Proteomes" id="UP000001006">
    <property type="component" value="Chromosome"/>
</dbReference>
<dbReference type="Proteomes" id="UP000002673">
    <property type="component" value="Chromosome"/>
</dbReference>
<dbReference type="GO" id="GO:0022625">
    <property type="term" value="C:cytosolic large ribosomal subunit"/>
    <property type="evidence" value="ECO:0007669"/>
    <property type="project" value="TreeGrafter"/>
</dbReference>
<dbReference type="GO" id="GO:0003735">
    <property type="term" value="F:structural constituent of ribosome"/>
    <property type="evidence" value="ECO:0007669"/>
    <property type="project" value="InterPro"/>
</dbReference>
<dbReference type="GO" id="GO:0006412">
    <property type="term" value="P:translation"/>
    <property type="evidence" value="ECO:0007669"/>
    <property type="project" value="UniProtKB-UniRule"/>
</dbReference>
<dbReference type="CDD" id="cd01658">
    <property type="entry name" value="Ribosomal_L30"/>
    <property type="match status" value="1"/>
</dbReference>
<dbReference type="FunFam" id="3.30.1390.20:FF:000001">
    <property type="entry name" value="50S ribosomal protein L30"/>
    <property type="match status" value="1"/>
</dbReference>
<dbReference type="Gene3D" id="3.30.1390.20">
    <property type="entry name" value="Ribosomal protein L30, ferredoxin-like fold domain"/>
    <property type="match status" value="1"/>
</dbReference>
<dbReference type="HAMAP" id="MF_01371_B">
    <property type="entry name" value="Ribosomal_uL30_B"/>
    <property type="match status" value="1"/>
</dbReference>
<dbReference type="InterPro" id="IPR036919">
    <property type="entry name" value="Ribo_uL30_ferredoxin-like_sf"/>
</dbReference>
<dbReference type="InterPro" id="IPR005996">
    <property type="entry name" value="Ribosomal_uL30_bac-type"/>
</dbReference>
<dbReference type="InterPro" id="IPR018038">
    <property type="entry name" value="Ribosomal_uL30_CS"/>
</dbReference>
<dbReference type="InterPro" id="IPR016082">
    <property type="entry name" value="Ribosomal_uL30_ferredoxin-like"/>
</dbReference>
<dbReference type="NCBIfam" id="TIGR01308">
    <property type="entry name" value="rpmD_bact"/>
    <property type="match status" value="1"/>
</dbReference>
<dbReference type="PANTHER" id="PTHR15892:SF2">
    <property type="entry name" value="LARGE RIBOSOMAL SUBUNIT PROTEIN UL30M"/>
    <property type="match status" value="1"/>
</dbReference>
<dbReference type="PANTHER" id="PTHR15892">
    <property type="entry name" value="MITOCHONDRIAL RIBOSOMAL PROTEIN L30"/>
    <property type="match status" value="1"/>
</dbReference>
<dbReference type="Pfam" id="PF00327">
    <property type="entry name" value="Ribosomal_L30"/>
    <property type="match status" value="1"/>
</dbReference>
<dbReference type="PIRSF" id="PIRSF002211">
    <property type="entry name" value="Ribosomal_L30_bac-type"/>
    <property type="match status" value="1"/>
</dbReference>
<dbReference type="SUPFAM" id="SSF55129">
    <property type="entry name" value="Ribosomal protein L30p/L7e"/>
    <property type="match status" value="1"/>
</dbReference>
<dbReference type="PROSITE" id="PS00634">
    <property type="entry name" value="RIBOSOMAL_L30"/>
    <property type="match status" value="1"/>
</dbReference>
<protein>
    <recommendedName>
        <fullName evidence="2">Large ribosomal subunit protein uL30</fullName>
    </recommendedName>
    <alternativeName>
        <fullName evidence="3">50S ribosomal protein L30</fullName>
    </alternativeName>
</protein>
<proteinExistence type="inferred from homology"/>
<keyword id="KW-1185">Reference proteome</keyword>
<keyword id="KW-0687">Ribonucleoprotein</keyword>
<keyword id="KW-0689">Ribosomal protein</keyword>
<evidence type="ECO:0000250" key="1"/>
<evidence type="ECO:0000255" key="2">
    <source>
        <dbReference type="HAMAP-Rule" id="MF_01371"/>
    </source>
</evidence>
<evidence type="ECO:0000305" key="3"/>
<organism>
    <name type="scientific">Shigella flexneri</name>
    <dbReference type="NCBI Taxonomy" id="623"/>
    <lineage>
        <taxon>Bacteria</taxon>
        <taxon>Pseudomonadati</taxon>
        <taxon>Pseudomonadota</taxon>
        <taxon>Gammaproteobacteria</taxon>
        <taxon>Enterobacterales</taxon>
        <taxon>Enterobacteriaceae</taxon>
        <taxon>Shigella</taxon>
    </lineage>
</organism>
<sequence>MAKTIKITQTRSAIGRLPKHKATLLGLGLRRIGHTVEREDTPAIRGMINAVSFMVKVEE</sequence>
<reference key="1">
    <citation type="journal article" date="2002" name="Nucleic Acids Res.">
        <title>Genome sequence of Shigella flexneri 2a: insights into pathogenicity through comparison with genomes of Escherichia coli K12 and O157.</title>
        <authorList>
            <person name="Jin Q."/>
            <person name="Yuan Z."/>
            <person name="Xu J."/>
            <person name="Wang Y."/>
            <person name="Shen Y."/>
            <person name="Lu W."/>
            <person name="Wang J."/>
            <person name="Liu H."/>
            <person name="Yang J."/>
            <person name="Yang F."/>
            <person name="Zhang X."/>
            <person name="Zhang J."/>
            <person name="Yang G."/>
            <person name="Wu H."/>
            <person name="Qu D."/>
            <person name="Dong J."/>
            <person name="Sun L."/>
            <person name="Xue Y."/>
            <person name="Zhao A."/>
            <person name="Gao Y."/>
            <person name="Zhu J."/>
            <person name="Kan B."/>
            <person name="Ding K."/>
            <person name="Chen S."/>
            <person name="Cheng H."/>
            <person name="Yao Z."/>
            <person name="He B."/>
            <person name="Chen R."/>
            <person name="Ma D."/>
            <person name="Qiang B."/>
            <person name="Wen Y."/>
            <person name="Hou Y."/>
            <person name="Yu J."/>
        </authorList>
    </citation>
    <scope>NUCLEOTIDE SEQUENCE [LARGE SCALE GENOMIC DNA]</scope>
    <source>
        <strain>301 / Serotype 2a</strain>
    </source>
</reference>
<reference key="2">
    <citation type="journal article" date="2003" name="Infect. Immun.">
        <title>Complete genome sequence and comparative genomics of Shigella flexneri serotype 2a strain 2457T.</title>
        <authorList>
            <person name="Wei J."/>
            <person name="Goldberg M.B."/>
            <person name="Burland V."/>
            <person name="Venkatesan M.M."/>
            <person name="Deng W."/>
            <person name="Fournier G."/>
            <person name="Mayhew G.F."/>
            <person name="Plunkett G. III"/>
            <person name="Rose D.J."/>
            <person name="Darling A."/>
            <person name="Mau B."/>
            <person name="Perna N.T."/>
            <person name="Payne S.M."/>
            <person name="Runyen-Janecky L.J."/>
            <person name="Zhou S."/>
            <person name="Schwartz D.C."/>
            <person name="Blattner F.R."/>
        </authorList>
    </citation>
    <scope>NUCLEOTIDE SEQUENCE [LARGE SCALE GENOMIC DNA]</scope>
    <source>
        <strain>ATCC 700930 / 2457T / Serotype 2a</strain>
    </source>
</reference>
<name>RL30_SHIFL</name>
<gene>
    <name evidence="2" type="primary">rpmD</name>
    <name type="ordered locus">SF3334</name>
    <name type="ordered locus">S4428</name>
</gene>
<feature type="initiator methionine" description="Removed" evidence="1">
    <location>
        <position position="1"/>
    </location>
</feature>
<feature type="chain" id="PRO_0000104604" description="Large ribosomal subunit protein uL30">
    <location>
        <begin position="2"/>
        <end position="59"/>
    </location>
</feature>
<accession>P0AG54</accession>
<accession>P02430</accession>
<comment type="subunit">
    <text>Part of the 50S ribosomal subunit.</text>
</comment>
<comment type="miscellaneous">
    <text evidence="1">This protein is located near the guanosine triphosphatase center of the 50S subunit.</text>
</comment>
<comment type="similarity">
    <text evidence="2">Belongs to the universal ribosomal protein uL30 family.</text>
</comment>